<proteinExistence type="inferred from homology"/>
<keyword id="KW-1003">Cell membrane</keyword>
<keyword id="KW-0297">G-protein coupled receptor</keyword>
<keyword id="KW-0325">Glycoprotein</keyword>
<keyword id="KW-0449">Lipoprotein</keyword>
<keyword id="KW-0472">Membrane</keyword>
<keyword id="KW-0564">Palmitate</keyword>
<keyword id="KW-0675">Receptor</keyword>
<keyword id="KW-0807">Transducer</keyword>
<keyword id="KW-0812">Transmembrane</keyword>
<keyword id="KW-1133">Transmembrane helix</keyword>
<name>MSHR_TRAAU</name>
<reference key="1">
    <citation type="journal article" date="2003" name="Am. J. Phys. Anthropol.">
        <title>Evolution of a pigmentation gene, the melanocortin-1 receptor, in primates.</title>
        <authorList>
            <person name="Mundy N.I."/>
            <person name="Kelly J."/>
        </authorList>
    </citation>
    <scope>NUCLEOTIDE SEQUENCE [GENOMIC DNA]</scope>
    <source>
        <strain>Isolate 3</strain>
    </source>
</reference>
<sequence length="317" mass="34756">MPVQGSQRRLLGSLNSTPTATPRLGLAANQTGARCLEVSIPDGLFLSLGLVSLVENVLVVVAIARNRNLHSPMYCFICCLALSDLLVSGSNMLETAVILLLEAGALAARAAVVQQLDNVIDVITCSSMLSSLCFLGAIAVDRYISIFYALRYHSIVTLRRARRVVAAIWVASVLFSTLFIAYCDHAAVLLSLVVFFLAMLVLMAVLYVHMLARACQHAQGIAQLHKRQRPAHQGVGLKGAATLTILLGIFFLCWGPFFLHLTLIVLCPQHPTCSCIFKNFNLFLTLIICNAIIDPLIYAFRSQELRRTLKKVLLCSW</sequence>
<evidence type="ECO:0000250" key="1">
    <source>
        <dbReference type="UniProtKB" id="Q01726"/>
    </source>
</evidence>
<evidence type="ECO:0000255" key="2"/>
<evidence type="ECO:0000255" key="3">
    <source>
        <dbReference type="PROSITE-ProRule" id="PRU00521"/>
    </source>
</evidence>
<accession>Q864I7</accession>
<feature type="chain" id="PRO_0000069852" description="Melanocyte-stimulating hormone receptor">
    <location>
        <begin position="1"/>
        <end position="317"/>
    </location>
</feature>
<feature type="topological domain" description="Extracellular" evidence="2">
    <location>
        <begin position="1"/>
        <end position="37"/>
    </location>
</feature>
<feature type="transmembrane region" description="Helical; Name=1" evidence="2">
    <location>
        <begin position="38"/>
        <end position="63"/>
    </location>
</feature>
<feature type="topological domain" description="Cytoplasmic" evidence="2">
    <location>
        <begin position="64"/>
        <end position="72"/>
    </location>
</feature>
<feature type="transmembrane region" description="Helical; Name=2" evidence="2">
    <location>
        <begin position="73"/>
        <end position="93"/>
    </location>
</feature>
<feature type="topological domain" description="Extracellular" evidence="2">
    <location>
        <begin position="94"/>
        <end position="118"/>
    </location>
</feature>
<feature type="transmembrane region" description="Helical; Name=3" evidence="2">
    <location>
        <begin position="119"/>
        <end position="140"/>
    </location>
</feature>
<feature type="topological domain" description="Cytoplasmic" evidence="2">
    <location>
        <begin position="141"/>
        <end position="163"/>
    </location>
</feature>
<feature type="transmembrane region" description="Helical; Name=4" evidence="2">
    <location>
        <begin position="164"/>
        <end position="183"/>
    </location>
</feature>
<feature type="topological domain" description="Extracellular" evidence="2">
    <location>
        <begin position="184"/>
        <end position="191"/>
    </location>
</feature>
<feature type="transmembrane region" description="Helical; Name=5" evidence="2">
    <location>
        <begin position="192"/>
        <end position="211"/>
    </location>
</feature>
<feature type="topological domain" description="Cytoplasmic" evidence="2">
    <location>
        <begin position="212"/>
        <end position="240"/>
    </location>
</feature>
<feature type="transmembrane region" description="Helical; Name=6" evidence="2">
    <location>
        <begin position="241"/>
        <end position="266"/>
    </location>
</feature>
<feature type="topological domain" description="Extracellular" evidence="2">
    <location>
        <begin position="267"/>
        <end position="279"/>
    </location>
</feature>
<feature type="transmembrane region" description="Helical; Name=7" evidence="2">
    <location>
        <begin position="280"/>
        <end position="300"/>
    </location>
</feature>
<feature type="topological domain" description="Cytoplasmic" evidence="2">
    <location>
        <begin position="301"/>
        <end position="317"/>
    </location>
</feature>
<feature type="lipid moiety-binding region" description="S-palmitoyl cysteine" evidence="2">
    <location>
        <position position="315"/>
    </location>
</feature>
<feature type="glycosylation site" description="N-linked (GlcNAc...) asparagine" evidence="2">
    <location>
        <position position="29"/>
    </location>
</feature>
<dbReference type="EMBL" id="AY205110">
    <property type="protein sequence ID" value="AAP30984.1"/>
    <property type="molecule type" value="Genomic_DNA"/>
</dbReference>
<dbReference type="SMR" id="Q864I7"/>
<dbReference type="GlyCosmos" id="Q864I7">
    <property type="glycosylation" value="1 site, No reported glycans"/>
</dbReference>
<dbReference type="GO" id="GO:0005886">
    <property type="term" value="C:plasma membrane"/>
    <property type="evidence" value="ECO:0000250"/>
    <property type="project" value="UniProtKB"/>
</dbReference>
<dbReference type="GO" id="GO:0004980">
    <property type="term" value="F:melanocyte-stimulating hormone receptor activity"/>
    <property type="evidence" value="ECO:0007669"/>
    <property type="project" value="InterPro"/>
</dbReference>
<dbReference type="GO" id="GO:0007189">
    <property type="term" value="P:adenylate cyclase-activating G protein-coupled receptor signaling pathway"/>
    <property type="evidence" value="ECO:0007669"/>
    <property type="project" value="UniProtKB-ARBA"/>
</dbReference>
<dbReference type="FunFam" id="1.20.1070.10:FF:000211">
    <property type="entry name" value="Melanocyte-stimulating hormone receptor"/>
    <property type="match status" value="1"/>
</dbReference>
<dbReference type="Gene3D" id="1.20.1070.10">
    <property type="entry name" value="Rhodopsin 7-helix transmembrane proteins"/>
    <property type="match status" value="1"/>
</dbReference>
<dbReference type="InterPro" id="IPR000276">
    <property type="entry name" value="GPCR_Rhodpsn"/>
</dbReference>
<dbReference type="InterPro" id="IPR017452">
    <property type="entry name" value="GPCR_Rhodpsn_7TM"/>
</dbReference>
<dbReference type="InterPro" id="IPR001671">
    <property type="entry name" value="Melcrt_ACTH_rcpt"/>
</dbReference>
<dbReference type="InterPro" id="IPR000761">
    <property type="entry name" value="MSH_rcpt"/>
</dbReference>
<dbReference type="PANTHER" id="PTHR22750">
    <property type="entry name" value="G-PROTEIN COUPLED RECEPTOR"/>
    <property type="match status" value="1"/>
</dbReference>
<dbReference type="Pfam" id="PF00001">
    <property type="entry name" value="7tm_1"/>
    <property type="match status" value="1"/>
</dbReference>
<dbReference type="PRINTS" id="PR00237">
    <property type="entry name" value="GPCRRHODOPSN"/>
</dbReference>
<dbReference type="PRINTS" id="PR00534">
    <property type="entry name" value="MCRFAMILY"/>
</dbReference>
<dbReference type="PRINTS" id="PR00536">
    <property type="entry name" value="MELNOCYTESHR"/>
</dbReference>
<dbReference type="SMART" id="SM01381">
    <property type="entry name" value="7TM_GPCR_Srsx"/>
    <property type="match status" value="1"/>
</dbReference>
<dbReference type="SUPFAM" id="SSF81321">
    <property type="entry name" value="Family A G protein-coupled receptor-like"/>
    <property type="match status" value="1"/>
</dbReference>
<dbReference type="PROSITE" id="PS00237">
    <property type="entry name" value="G_PROTEIN_RECEP_F1_1"/>
    <property type="match status" value="1"/>
</dbReference>
<dbReference type="PROSITE" id="PS50262">
    <property type="entry name" value="G_PROTEIN_RECEP_F1_2"/>
    <property type="match status" value="1"/>
</dbReference>
<comment type="function">
    <text evidence="1">Receptor for MSH (alpha, beta and gamma) and ACTH. The activity of this receptor is mediated by G proteins which activate adenylate cyclase. Mediates melanogenesis, the production of eumelanin (black/brown) and phaeomelanin (red/yellow), via regulation of cAMP signaling in melanocytes.</text>
</comment>
<comment type="subunit">
    <text evidence="1">Interacts with MGRN1, but does not undergo MGRN1-mediated ubiquitination; this interaction competes with GNAS-binding and thus inhibits agonist-induced cAMP production. Interacts with OPN3; the interaction results in a decrease in MC1R-mediated cAMP signaling and ultimately a decrease in melanin production in melanocytes.</text>
</comment>
<comment type="subcellular location">
    <subcellularLocation>
        <location evidence="1">Cell membrane</location>
        <topology evidence="2">Multi-pass membrane protein</topology>
    </subcellularLocation>
</comment>
<comment type="similarity">
    <text evidence="3">Belongs to the G-protein coupled receptor 1 family.</text>
</comment>
<gene>
    <name type="primary">MC1R</name>
</gene>
<protein>
    <recommendedName>
        <fullName>Melanocyte-stimulating hormone receptor</fullName>
        <shortName>MSH-R</shortName>
    </recommendedName>
    <alternativeName>
        <fullName>Melanocortin receptor 1</fullName>
        <shortName>MC1-R</shortName>
    </alternativeName>
</protein>
<organism>
    <name type="scientific">Trachypithecus auratus</name>
    <name type="common">Javan langur</name>
    <dbReference type="NCBI Taxonomy" id="222416"/>
    <lineage>
        <taxon>Eukaryota</taxon>
        <taxon>Metazoa</taxon>
        <taxon>Chordata</taxon>
        <taxon>Craniata</taxon>
        <taxon>Vertebrata</taxon>
        <taxon>Euteleostomi</taxon>
        <taxon>Mammalia</taxon>
        <taxon>Eutheria</taxon>
        <taxon>Euarchontoglires</taxon>
        <taxon>Primates</taxon>
        <taxon>Haplorrhini</taxon>
        <taxon>Catarrhini</taxon>
        <taxon>Cercopithecidae</taxon>
        <taxon>Colobinae</taxon>
        <taxon>Trachypithecus</taxon>
    </lineage>
</organism>